<reference key="1">
    <citation type="journal article" date="2002" name="Nature">
        <title>The genome sequence of Schizosaccharomyces pombe.</title>
        <authorList>
            <person name="Wood V."/>
            <person name="Gwilliam R."/>
            <person name="Rajandream M.A."/>
            <person name="Lyne M.H."/>
            <person name="Lyne R."/>
            <person name="Stewart A."/>
            <person name="Sgouros J.G."/>
            <person name="Peat N."/>
            <person name="Hayles J."/>
            <person name="Baker S.G."/>
            <person name="Basham D."/>
            <person name="Bowman S."/>
            <person name="Brooks K."/>
            <person name="Brown D."/>
            <person name="Brown S."/>
            <person name="Chillingworth T."/>
            <person name="Churcher C.M."/>
            <person name="Collins M."/>
            <person name="Connor R."/>
            <person name="Cronin A."/>
            <person name="Davis P."/>
            <person name="Feltwell T."/>
            <person name="Fraser A."/>
            <person name="Gentles S."/>
            <person name="Goble A."/>
            <person name="Hamlin N."/>
            <person name="Harris D.E."/>
            <person name="Hidalgo J."/>
            <person name="Hodgson G."/>
            <person name="Holroyd S."/>
            <person name="Hornsby T."/>
            <person name="Howarth S."/>
            <person name="Huckle E.J."/>
            <person name="Hunt S."/>
            <person name="Jagels K."/>
            <person name="James K.D."/>
            <person name="Jones L."/>
            <person name="Jones M."/>
            <person name="Leather S."/>
            <person name="McDonald S."/>
            <person name="McLean J."/>
            <person name="Mooney P."/>
            <person name="Moule S."/>
            <person name="Mungall K.L."/>
            <person name="Murphy L.D."/>
            <person name="Niblett D."/>
            <person name="Odell C."/>
            <person name="Oliver K."/>
            <person name="O'Neil S."/>
            <person name="Pearson D."/>
            <person name="Quail M.A."/>
            <person name="Rabbinowitsch E."/>
            <person name="Rutherford K.M."/>
            <person name="Rutter S."/>
            <person name="Saunders D."/>
            <person name="Seeger K."/>
            <person name="Sharp S."/>
            <person name="Skelton J."/>
            <person name="Simmonds M.N."/>
            <person name="Squares R."/>
            <person name="Squares S."/>
            <person name="Stevens K."/>
            <person name="Taylor K."/>
            <person name="Taylor R.G."/>
            <person name="Tivey A."/>
            <person name="Walsh S.V."/>
            <person name="Warren T."/>
            <person name="Whitehead S."/>
            <person name="Woodward J.R."/>
            <person name="Volckaert G."/>
            <person name="Aert R."/>
            <person name="Robben J."/>
            <person name="Grymonprez B."/>
            <person name="Weltjens I."/>
            <person name="Vanstreels E."/>
            <person name="Rieger M."/>
            <person name="Schaefer M."/>
            <person name="Mueller-Auer S."/>
            <person name="Gabel C."/>
            <person name="Fuchs M."/>
            <person name="Duesterhoeft A."/>
            <person name="Fritzc C."/>
            <person name="Holzer E."/>
            <person name="Moestl D."/>
            <person name="Hilbert H."/>
            <person name="Borzym K."/>
            <person name="Langer I."/>
            <person name="Beck A."/>
            <person name="Lehrach H."/>
            <person name="Reinhardt R."/>
            <person name="Pohl T.M."/>
            <person name="Eger P."/>
            <person name="Zimmermann W."/>
            <person name="Wedler H."/>
            <person name="Wambutt R."/>
            <person name="Purnelle B."/>
            <person name="Goffeau A."/>
            <person name="Cadieu E."/>
            <person name="Dreano S."/>
            <person name="Gloux S."/>
            <person name="Lelaure V."/>
            <person name="Mottier S."/>
            <person name="Galibert F."/>
            <person name="Aves S.J."/>
            <person name="Xiang Z."/>
            <person name="Hunt C."/>
            <person name="Moore K."/>
            <person name="Hurst S.M."/>
            <person name="Lucas M."/>
            <person name="Rochet M."/>
            <person name="Gaillardin C."/>
            <person name="Tallada V.A."/>
            <person name="Garzon A."/>
            <person name="Thode G."/>
            <person name="Daga R.R."/>
            <person name="Cruzado L."/>
            <person name="Jimenez J."/>
            <person name="Sanchez M."/>
            <person name="del Rey F."/>
            <person name="Benito J."/>
            <person name="Dominguez A."/>
            <person name="Revuelta J.L."/>
            <person name="Moreno S."/>
            <person name="Armstrong J."/>
            <person name="Forsburg S.L."/>
            <person name="Cerutti L."/>
            <person name="Lowe T."/>
            <person name="McCombie W.R."/>
            <person name="Paulsen I."/>
            <person name="Potashkin J."/>
            <person name="Shpakovski G.V."/>
            <person name="Ussery D."/>
            <person name="Barrell B.G."/>
            <person name="Nurse P."/>
        </authorList>
    </citation>
    <scope>NUCLEOTIDE SEQUENCE [LARGE SCALE GENOMIC DNA]</scope>
    <source>
        <strain>972 / ATCC 24843</strain>
    </source>
</reference>
<reference key="2">
    <citation type="journal article" date="2003" name="Mol. Cell">
        <title>BTB/POZ domain proteins are putative substrate adaptors for cullin 3 ubiquitin ligases.</title>
        <authorList>
            <person name="Geyer R."/>
            <person name="Wee S."/>
            <person name="Anderson S."/>
            <person name="Yates J. III"/>
            <person name="Wolf D.A."/>
        </authorList>
    </citation>
    <scope>INTERACTION WITH CUL3</scope>
</reference>
<organism>
    <name type="scientific">Schizosaccharomyces pombe (strain 972 / ATCC 24843)</name>
    <name type="common">Fission yeast</name>
    <dbReference type="NCBI Taxonomy" id="284812"/>
    <lineage>
        <taxon>Eukaryota</taxon>
        <taxon>Fungi</taxon>
        <taxon>Dikarya</taxon>
        <taxon>Ascomycota</taxon>
        <taxon>Taphrinomycotina</taxon>
        <taxon>Schizosaccharomycetes</taxon>
        <taxon>Schizosaccharomycetales</taxon>
        <taxon>Schizosaccharomycetaceae</taxon>
        <taxon>Schizosaccharomyces</taxon>
    </lineage>
</organism>
<name>BTB1_SCHPO</name>
<comment type="function">
    <text>Probable substrate-specific adapter of an E3 ubiquitin-protein ligase complex which mediates the ubiquitination and subsequent proteasomal degradation of target proteins.</text>
</comment>
<comment type="pathway">
    <text>Protein modification; protein ubiquitination.</text>
</comment>
<comment type="subunit">
    <text evidence="3">Interacts with cul3.</text>
</comment>
<comment type="interaction">
    <interactant intactId="EBI-3647943">
        <id>O74881</id>
    </interactant>
    <interactant intactId="EBI-3647930">
        <id>Q09760</id>
        <label>cul3</label>
    </interactant>
    <organismsDiffer>false</organismsDiffer>
    <experiments>3</experiments>
</comment>
<feature type="chain" id="PRO_0000278357" description="BTB/POZ domain-containing protein 1">
    <location>
        <begin position="1"/>
        <end position="1347"/>
    </location>
</feature>
<feature type="repeat" description="ANK 1">
    <location>
        <begin position="51"/>
        <end position="81"/>
    </location>
</feature>
<feature type="repeat" description="ANK 2">
    <location>
        <begin position="86"/>
        <end position="115"/>
    </location>
</feature>
<feature type="repeat" description="RCC1 1">
    <location>
        <begin position="148"/>
        <end position="198"/>
    </location>
</feature>
<feature type="repeat" description="RCC1 2">
    <location>
        <begin position="215"/>
        <end position="264"/>
    </location>
</feature>
<feature type="repeat" description="RCC1 3">
    <location>
        <begin position="265"/>
        <end position="322"/>
    </location>
</feature>
<feature type="repeat" description="RCC1 4">
    <location>
        <begin position="324"/>
        <end position="372"/>
    </location>
</feature>
<feature type="domain" description="BTB 1" evidence="1">
    <location>
        <begin position="619"/>
        <end position="698"/>
    </location>
</feature>
<feature type="domain" description="BTB 2" evidence="1">
    <location>
        <begin position="758"/>
        <end position="829"/>
    </location>
</feature>
<feature type="region of interest" description="Disordered" evidence="2">
    <location>
        <begin position="1006"/>
        <end position="1029"/>
    </location>
</feature>
<feature type="region of interest" description="Disordered" evidence="2">
    <location>
        <begin position="1104"/>
        <end position="1139"/>
    </location>
</feature>
<feature type="region of interest" description="Disordered" evidence="2">
    <location>
        <begin position="1193"/>
        <end position="1237"/>
    </location>
</feature>
<feature type="region of interest" description="Disordered" evidence="2">
    <location>
        <begin position="1286"/>
        <end position="1347"/>
    </location>
</feature>
<feature type="compositionally biased region" description="Basic and acidic residues" evidence="2">
    <location>
        <begin position="1013"/>
        <end position="1023"/>
    </location>
</feature>
<feature type="compositionally biased region" description="Polar residues" evidence="2">
    <location>
        <begin position="1208"/>
        <end position="1237"/>
    </location>
</feature>
<feature type="compositionally biased region" description="Polar residues" evidence="2">
    <location>
        <begin position="1297"/>
        <end position="1306"/>
    </location>
</feature>
<feature type="compositionally biased region" description="Basic residues" evidence="2">
    <location>
        <begin position="1336"/>
        <end position="1347"/>
    </location>
</feature>
<keyword id="KW-0040">ANK repeat</keyword>
<keyword id="KW-1185">Reference proteome</keyword>
<keyword id="KW-0677">Repeat</keyword>
<keyword id="KW-0833">Ubl conjugation pathway</keyword>
<proteinExistence type="evidence at protein level"/>
<dbReference type="EMBL" id="CU329672">
    <property type="protein sequence ID" value="CAA20916.1"/>
    <property type="molecule type" value="Genomic_DNA"/>
</dbReference>
<dbReference type="PIR" id="T41321">
    <property type="entry name" value="T41321"/>
</dbReference>
<dbReference type="RefSeq" id="NP_587711.1">
    <property type="nucleotide sequence ID" value="NM_001022706.1"/>
</dbReference>
<dbReference type="SMR" id="O74881"/>
<dbReference type="BioGRID" id="275298">
    <property type="interactions" value="29"/>
</dbReference>
<dbReference type="FunCoup" id="O74881">
    <property type="interactions" value="104"/>
</dbReference>
<dbReference type="IntAct" id="O74881">
    <property type="interactions" value="2"/>
</dbReference>
<dbReference type="STRING" id="284812.O74881"/>
<dbReference type="iPTMnet" id="O74881"/>
<dbReference type="PaxDb" id="4896-SPCC330.11.1"/>
<dbReference type="EnsemblFungi" id="SPCC330.11.1">
    <property type="protein sequence ID" value="SPCC330.11.1:pep"/>
    <property type="gene ID" value="SPCC330.11"/>
</dbReference>
<dbReference type="GeneID" id="2538714"/>
<dbReference type="KEGG" id="spo:2538714"/>
<dbReference type="PomBase" id="SPCC330.11">
    <property type="gene designation" value="btb1"/>
</dbReference>
<dbReference type="VEuPathDB" id="FungiDB:SPCC330.11"/>
<dbReference type="eggNOG" id="KOG0783">
    <property type="taxonomic scope" value="Eukaryota"/>
</dbReference>
<dbReference type="HOGENOM" id="CLU_004619_0_0_1"/>
<dbReference type="InParanoid" id="O74881"/>
<dbReference type="OMA" id="FEFVLRY"/>
<dbReference type="PhylomeDB" id="O74881"/>
<dbReference type="UniPathway" id="UPA00143"/>
<dbReference type="PRO" id="PR:O74881"/>
<dbReference type="Proteomes" id="UP000002485">
    <property type="component" value="Chromosome III"/>
</dbReference>
<dbReference type="GO" id="GO:0000151">
    <property type="term" value="C:ubiquitin ligase complex"/>
    <property type="evidence" value="ECO:0000353"/>
    <property type="project" value="PomBase"/>
</dbReference>
<dbReference type="GO" id="GO:1990756">
    <property type="term" value="F:ubiquitin-like ligase-substrate adaptor activity"/>
    <property type="evidence" value="ECO:0000255"/>
    <property type="project" value="PomBase"/>
</dbReference>
<dbReference type="GO" id="GO:0016567">
    <property type="term" value="P:protein ubiquitination"/>
    <property type="evidence" value="ECO:0007669"/>
    <property type="project" value="UniProtKB-UniPathway"/>
</dbReference>
<dbReference type="CDD" id="cd18286">
    <property type="entry name" value="BTB2_POZ_BTBD8"/>
    <property type="match status" value="1"/>
</dbReference>
<dbReference type="CDD" id="cd18186">
    <property type="entry name" value="BTB_POZ_ZBTB_KLHL-like"/>
    <property type="match status" value="1"/>
</dbReference>
<dbReference type="Gene3D" id="1.25.40.20">
    <property type="entry name" value="Ankyrin repeat-containing domain"/>
    <property type="match status" value="1"/>
</dbReference>
<dbReference type="Gene3D" id="3.30.710.10">
    <property type="entry name" value="Potassium Channel Kv1.1, Chain A"/>
    <property type="match status" value="2"/>
</dbReference>
<dbReference type="Gene3D" id="2.130.10.30">
    <property type="entry name" value="Regulator of chromosome condensation 1/beta-lactamase-inhibitor protein II"/>
    <property type="match status" value="1"/>
</dbReference>
<dbReference type="InterPro" id="IPR002110">
    <property type="entry name" value="Ankyrin_rpt"/>
</dbReference>
<dbReference type="InterPro" id="IPR036770">
    <property type="entry name" value="Ankyrin_rpt-contain_sf"/>
</dbReference>
<dbReference type="InterPro" id="IPR000210">
    <property type="entry name" value="BTB/POZ_dom"/>
</dbReference>
<dbReference type="InterPro" id="IPR009091">
    <property type="entry name" value="RCC1/BLIP-II"/>
</dbReference>
<dbReference type="InterPro" id="IPR000408">
    <property type="entry name" value="Reg_chr_condens"/>
</dbReference>
<dbReference type="InterPro" id="IPR051625">
    <property type="entry name" value="Signaling_Regulatory_Domain"/>
</dbReference>
<dbReference type="InterPro" id="IPR011333">
    <property type="entry name" value="SKP1/BTB/POZ_sf"/>
</dbReference>
<dbReference type="PANTHER" id="PTHR22872">
    <property type="entry name" value="BTK-BINDING PROTEIN-RELATED"/>
    <property type="match status" value="1"/>
</dbReference>
<dbReference type="PANTHER" id="PTHR22872:SF2">
    <property type="entry name" value="INHIBITOR OF BRUTON TYROSINE KINASE"/>
    <property type="match status" value="1"/>
</dbReference>
<dbReference type="Pfam" id="PF12796">
    <property type="entry name" value="Ank_2"/>
    <property type="match status" value="1"/>
</dbReference>
<dbReference type="Pfam" id="PF00651">
    <property type="entry name" value="BTB"/>
    <property type="match status" value="2"/>
</dbReference>
<dbReference type="Pfam" id="PF00415">
    <property type="entry name" value="RCC1"/>
    <property type="match status" value="2"/>
</dbReference>
<dbReference type="SMART" id="SM00248">
    <property type="entry name" value="ANK"/>
    <property type="match status" value="2"/>
</dbReference>
<dbReference type="SMART" id="SM00225">
    <property type="entry name" value="BTB"/>
    <property type="match status" value="2"/>
</dbReference>
<dbReference type="SUPFAM" id="SSF48403">
    <property type="entry name" value="Ankyrin repeat"/>
    <property type="match status" value="1"/>
</dbReference>
<dbReference type="SUPFAM" id="SSF54695">
    <property type="entry name" value="POZ domain"/>
    <property type="match status" value="2"/>
</dbReference>
<dbReference type="SUPFAM" id="SSF50985">
    <property type="entry name" value="RCC1/BLIP-II"/>
    <property type="match status" value="1"/>
</dbReference>
<dbReference type="PROSITE" id="PS50297">
    <property type="entry name" value="ANK_REP_REGION"/>
    <property type="match status" value="1"/>
</dbReference>
<dbReference type="PROSITE" id="PS50088">
    <property type="entry name" value="ANK_REPEAT"/>
    <property type="match status" value="2"/>
</dbReference>
<dbReference type="PROSITE" id="PS50097">
    <property type="entry name" value="BTB"/>
    <property type="match status" value="2"/>
</dbReference>
<dbReference type="PROSITE" id="PS50012">
    <property type="entry name" value="RCC1_3"/>
    <property type="match status" value="4"/>
</dbReference>
<gene>
    <name type="primary">btb1</name>
    <name type="ORF">SPCC330.11</name>
</gene>
<protein>
    <recommendedName>
        <fullName>BTB/POZ domain-containing protein 1</fullName>
    </recommendedName>
</protein>
<accession>O74881</accession>
<evidence type="ECO:0000255" key="1">
    <source>
        <dbReference type="PROSITE-ProRule" id="PRU00037"/>
    </source>
</evidence>
<evidence type="ECO:0000256" key="2">
    <source>
        <dbReference type="SAM" id="MobiDB-lite"/>
    </source>
</evidence>
<evidence type="ECO:0000269" key="3">
    <source>
    </source>
</evidence>
<sequence>MSHLLFAYYLCNDIRSFQNLLKQDDSKVKEPRKGFSEKSGQKLRINQKDRYGRTVLHIAVSENKNSFVRSLLQHKGIDVFVQDEESGYTALHRAIYVGNLEAASLLLSKDPSFRSLRIKDKEGLSPFQFLSRVLSSTIHPVLDLPIIGNELYGFGTNVNNTLGIANGKEPSSPERVFLLKNQTESPTSGQLFSRDKILDVQASKFHSVVLTDEPSQNVYVCGIGAGGRIGFNTDVQYNFIPIPGIIHKVIQISVSHTHSLALTKFGSIYSWGKNGSGELGLSNDELKKDDPIQITPRRISAFKDYQIIGMAAGKSYSVAWTDTDIYSWGLNNGQLGISDHISVVSTPRRVAGLLSPVIHAVCTTRATICLLQNNSIIAFCNYNQVKLPFNVDFGSSLKVTKHPLSLTRFNVRKLLASENKLAVLTELGEVYEFDMKLLLDRDSTSSKNSTRTSFKFTPLWIFESSDLAALDIAWTADNSLILCTRNGTCWKRELRSKKREKSSSSPYSRGPYKYNRIENLQMVVGVRASASGSFFAIRNDYLPPPIYKPSNMLIDLLRSLLPYDHLLHVRQPRLIPPEDEDGVPIFDEDRAASSNEMQLLFEGSIPILTSYENYKQSFSDVTIYCGTSMFHSHKFILCARSSFLRKLLLQKKKSSVSNIIYIEEITQSHSTIRVEDIPPLAVAILLHYLYTDTLLSPWHLDSRFSPLKENLSKLANLLELPHLAEVLPFSVSRQPLLSLTNDILQLYNNFYVLCEETMDTVIKLKDGELKAHGLFLSLRSEYFSSYFQFVSMESNSFDIPITVNLSHLTVEHMSIVLRHVYSDLKVELFDDLKESDFHNWLETMFEILSIADELLFLELKSIAQQSLLRFLNLKTLPTLMDLSLSYHAEELYSRCIDYACHNIEFFLEANRISEWDGFHLKKVAQRLTELLSDQRVHLPSSKIANRLLIRDPVLMEKRNYELKVLREYLFSQESSQLWDDSPYRSIFEDRRCSTSAVILESGIVPSSNQSDSLNKEDAEEKSPKPNVVNVTSITKTAGASVEIQNNIESASSGGDKTQLNGPGADQPVTATITFDKTSPWRNRENLSHNNNTTRASLRELLEQEKADASTTTVLSDSRFMKAPTKKSQREKKKELSKQVPISKTNVGHIDIELGKSNHSNPWSVATHQRGSFSSSTGVKKSFNGILREAAREEGSSQVIYQESKKRISNGSPTSWNLLTKPSPRSASLPKNSQPLSISEIMTEQKEEIESQKRRSSFRKTIEEIQQEEEFQKWWEEESLRVQKELGILKTERDTSTNRKQGQASKQPQRRHRKEKDSKVSESTAEFKSLPIDIPRTTHKKGKARAVK</sequence>